<keyword id="KW-0002">3D-structure</keyword>
<keyword id="KW-0007">Acetylation</keyword>
<keyword id="KW-0049">Antioxidant</keyword>
<keyword id="KW-0963">Cytoplasm</keyword>
<keyword id="KW-0903">Direct protein sequencing</keyword>
<keyword id="KW-1015">Disulfide bond</keyword>
<keyword id="KW-1017">Isopeptide bond</keyword>
<keyword id="KW-0560">Oxidoreductase</keyword>
<keyword id="KW-0575">Peroxidase</keyword>
<keyword id="KW-0597">Phosphoprotein</keyword>
<keyword id="KW-1267">Proteomics identification</keyword>
<keyword id="KW-0676">Redox-active center</keyword>
<keyword id="KW-1185">Reference proteome</keyword>
<keyword id="KW-0832">Ubl conjugation</keyword>
<sequence>MSSGNAKIGHPAPNFKATAVMPDGQFKDISLSDYKGKYVVFFFYPLDFTFVCPTEIIAFSDRAEEFKKLNCQVIGASVDSHFCHLAWVNTPKKQGGLGPMNIPLVSDPKRTIAQDYGVLKADEGISFRGLFIIDDKGILRQITVNDLPVGRSVDETLRLVQAFQFTDKHGEVCPAGWKPGSDTIKPDVQKSKEYFSKQK</sequence>
<feature type="initiator methionine" description="Removed" evidence="28">
    <location>
        <position position="1"/>
    </location>
</feature>
<feature type="chain" id="PRO_0000135076" description="Peroxiredoxin-1">
    <location>
        <begin position="2"/>
        <end position="199"/>
    </location>
</feature>
<feature type="domain" description="Thioredoxin" evidence="3">
    <location>
        <begin position="6"/>
        <end position="165"/>
    </location>
</feature>
<feature type="region of interest" description="Disordered" evidence="4">
    <location>
        <begin position="176"/>
        <end position="199"/>
    </location>
</feature>
<feature type="compositionally biased region" description="Basic and acidic residues" evidence="4">
    <location>
        <begin position="184"/>
        <end position="199"/>
    </location>
</feature>
<feature type="active site" description="Cysteine sulfenic acid (-SOH) intermediate" evidence="20 21">
    <location>
        <position position="52"/>
    </location>
</feature>
<feature type="modified residue" description="N-acetylserine" evidence="28">
    <location>
        <position position="2"/>
    </location>
</feature>
<feature type="modified residue" description="N6-acetyllysine; alternate" evidence="24">
    <location>
        <position position="7"/>
    </location>
</feature>
<feature type="modified residue" description="N6-acetyllysine" evidence="24">
    <location>
        <position position="16"/>
    </location>
</feature>
<feature type="modified residue" description="N6-acetyllysine" evidence="24">
    <location>
        <position position="27"/>
    </location>
</feature>
<feature type="modified residue" description="Phosphoserine" evidence="25 26">
    <location>
        <position position="32"/>
    </location>
</feature>
<feature type="modified residue" description="N6-acetyllysine; alternate" evidence="24">
    <location>
        <position position="35"/>
    </location>
</feature>
<feature type="modified residue" description="N6-succinyllysine; alternate" evidence="2">
    <location>
        <position position="35"/>
    </location>
</feature>
<feature type="modified residue" description="Phosphothreonine; by CDK1" evidence="5">
    <location>
        <position position="90"/>
    </location>
</feature>
<feature type="modified residue" description="N6-acetyllysine" evidence="2">
    <location>
        <position position="136"/>
    </location>
</feature>
<feature type="modified residue" description="N6-acetyllysine" evidence="13">
    <location>
        <position position="197"/>
    </location>
</feature>
<feature type="disulfide bond" description="Interchain (with C-173); in linked form" evidence="17 23">
    <location>
        <position position="52"/>
    </location>
</feature>
<feature type="disulfide bond" description="Interchain (with C-52); in linked form" evidence="17 23">
    <location>
        <position position="173"/>
    </location>
</feature>
<feature type="cross-link" description="Glycyl lysine isopeptide (Lys-Gly) (interchain with G-Cter in SUMO2); alternate" evidence="29">
    <location>
        <position position="7"/>
    </location>
</feature>
<feature type="cross-link" description="Glycyl lysine isopeptide (Lys-Gly) (interchain with G-Cter in SUMO2)" evidence="29">
    <location>
        <position position="120"/>
    </location>
</feature>
<feature type="cross-link" description="Glycyl lysine isopeptide (Lys-Gly) (interchain with G-Cter in SUMO1)" evidence="27">
    <location>
        <position position="185"/>
    </location>
</feature>
<feature type="sequence variant" id="VAR_025050" description="In dbSNP:rs34034070." evidence="18">
    <original>R</original>
    <variation>G</variation>
    <location>
        <position position="62"/>
    </location>
</feature>
<feature type="mutagenesis site" description="Abolishes phosphorylation by CDK1; 30% reduction in enzymatic activity." evidence="5">
    <original>T</original>
    <variation>A</variation>
    <location>
        <position position="90"/>
    </location>
</feature>
<feature type="mutagenesis site" description="87% reduction in enzymatic activity." evidence="5">
    <original>T</original>
    <variation>D</variation>
    <location>
        <position position="90"/>
    </location>
</feature>
<feature type="mutagenesis site" description="Reduces acetylation." evidence="13">
    <original>K</original>
    <variation>Q</variation>
    <variation>R</variation>
    <location>
        <position position="197"/>
    </location>
</feature>
<feature type="sequence conflict" description="In Ref. 2." evidence="19" ref="2">
    <original>L</original>
    <variation>P</variation>
    <location>
        <position position="147"/>
    </location>
</feature>
<feature type="sequence conflict" description="In Ref. 2." evidence="19" ref="2">
    <original>VG</original>
    <variation>CC</variation>
    <location>
        <begin position="149"/>
        <end position="150"/>
    </location>
</feature>
<feature type="sequence conflict" description="In Ref. 2." evidence="19" ref="2">
    <original>Q</original>
    <variation>P</variation>
    <location>
        <position position="189"/>
    </location>
</feature>
<feature type="sequence conflict" description="In Ref. 2." evidence="19" ref="2">
    <original>S</original>
    <variation>T</variation>
    <location>
        <position position="191"/>
    </location>
</feature>
<feature type="strand" evidence="32">
    <location>
        <begin position="2"/>
        <end position="5"/>
    </location>
</feature>
<feature type="strand" evidence="33">
    <location>
        <begin position="16"/>
        <end position="20"/>
    </location>
</feature>
<feature type="strand" evidence="33">
    <location>
        <begin position="26"/>
        <end position="30"/>
    </location>
</feature>
<feature type="helix" evidence="33">
    <location>
        <begin position="31"/>
        <end position="34"/>
    </location>
</feature>
<feature type="strand" evidence="33">
    <location>
        <begin position="37"/>
        <end position="43"/>
    </location>
</feature>
<feature type="helix" evidence="32">
    <location>
        <begin position="48"/>
        <end position="50"/>
    </location>
</feature>
<feature type="helix" evidence="33">
    <location>
        <begin position="52"/>
        <end position="61"/>
    </location>
</feature>
<feature type="helix" evidence="33">
    <location>
        <begin position="63"/>
        <end position="67"/>
    </location>
</feature>
<feature type="turn" evidence="33">
    <location>
        <begin position="68"/>
        <end position="70"/>
    </location>
</feature>
<feature type="strand" evidence="33">
    <location>
        <begin position="71"/>
        <end position="79"/>
    </location>
</feature>
<feature type="helix" evidence="33">
    <location>
        <begin position="81"/>
        <end position="88"/>
    </location>
</feature>
<feature type="helix" evidence="33">
    <location>
        <begin position="92"/>
        <end position="94"/>
    </location>
</feature>
<feature type="strand" evidence="33">
    <location>
        <begin position="104"/>
        <end position="106"/>
    </location>
</feature>
<feature type="helix" evidence="33">
    <location>
        <begin position="111"/>
        <end position="115"/>
    </location>
</feature>
<feature type="turn" evidence="33">
    <location>
        <begin position="121"/>
        <end position="123"/>
    </location>
</feature>
<feature type="strand" evidence="31">
    <location>
        <begin position="124"/>
        <end position="126"/>
    </location>
</feature>
<feature type="strand" evidence="33">
    <location>
        <begin position="128"/>
        <end position="133"/>
    </location>
</feature>
<feature type="strand" evidence="33">
    <location>
        <begin position="137"/>
        <end position="145"/>
    </location>
</feature>
<feature type="helix" evidence="33">
    <location>
        <begin position="153"/>
        <end position="166"/>
    </location>
</feature>
<feature type="strand" evidence="30">
    <location>
        <begin position="169"/>
        <end position="171"/>
    </location>
</feature>
<feature type="helix" evidence="31">
    <location>
        <begin position="181"/>
        <end position="183"/>
    </location>
</feature>
<accession>Q06830</accession>
<accession>B5BU26</accession>
<accession>D3DPZ8</accession>
<accession>P35703</accession>
<accession>Q2V576</accession>
<accession>Q5T154</accession>
<accession>Q5T155</accession>
<proteinExistence type="evidence at protein level"/>
<reference key="1">
    <citation type="journal article" date="1993" name="J. Biol. Chem.">
        <title>A human cDNA corresponding to a gene overexpressed during cell proliferation encodes a product sharing homology with amoebic and bacterial proteins.</title>
        <authorList>
            <person name="Prosperi M.T."/>
            <person name="Ferbus D."/>
            <person name="Karczinski I."/>
            <person name="Goubin G."/>
        </authorList>
    </citation>
    <scope>NUCLEOTIDE SEQUENCE [MRNA]</scope>
</reference>
<reference key="2">
    <citation type="journal article" date="1994" name="Immunogenetics">
        <title>Cloning and sequence analysis of candidate human natural killer-enhancing factor genes.</title>
        <authorList>
            <person name="Shau H."/>
            <person name="Butterfield L.H."/>
            <person name="Chiu R."/>
            <person name="Kim A."/>
        </authorList>
    </citation>
    <scope>NUCLEOTIDE SEQUENCE [MRNA]</scope>
</reference>
<reference key="3">
    <citation type="submission" date="2004-10" db="EMBL/GenBank/DDBJ databases">
        <title>Cloning of human full-length CDSs in BD Creator(TM) system donor vector.</title>
        <authorList>
            <person name="Kalnine N."/>
            <person name="Chen X."/>
            <person name="Rolfs A."/>
            <person name="Halleck A."/>
            <person name="Hines L."/>
            <person name="Eisenstein S."/>
            <person name="Koundinya M."/>
            <person name="Raphael J."/>
            <person name="Moreira D."/>
            <person name="Kelley T."/>
            <person name="LaBaer J."/>
            <person name="Lin Y."/>
            <person name="Phelan M."/>
            <person name="Farmer A."/>
        </authorList>
    </citation>
    <scope>NUCLEOTIDE SEQUENCE [LARGE SCALE MRNA]</scope>
</reference>
<reference key="4">
    <citation type="submission" date="2004-05" db="EMBL/GenBank/DDBJ databases">
        <title>Cloning of human full open reading frames in Gateway(TM) system entry vector (pDONR201).</title>
        <authorList>
            <person name="Ebert L."/>
            <person name="Schick M."/>
            <person name="Neubert P."/>
            <person name="Schatten R."/>
            <person name="Henze S."/>
            <person name="Korn B."/>
        </authorList>
    </citation>
    <scope>NUCLEOTIDE SEQUENCE [LARGE SCALE MRNA]</scope>
</reference>
<reference key="5">
    <citation type="submission" date="2005-11" db="EMBL/GenBank/DDBJ databases">
        <authorList>
            <consortium name="NIEHS SNPs program"/>
        </authorList>
    </citation>
    <scope>NUCLEOTIDE SEQUENCE [GENOMIC DNA]</scope>
    <scope>VARIANT GLY-62</scope>
</reference>
<reference key="6">
    <citation type="journal article" date="2008" name="Nat. Methods">
        <title>Human protein factory for converting the transcriptome into an in vitro-expressed proteome.</title>
        <authorList>
            <person name="Goshima N."/>
            <person name="Kawamura Y."/>
            <person name="Fukumoto A."/>
            <person name="Miura A."/>
            <person name="Honma R."/>
            <person name="Satoh R."/>
            <person name="Wakamatsu A."/>
            <person name="Yamamoto J."/>
            <person name="Kimura K."/>
            <person name="Nishikawa T."/>
            <person name="Andoh T."/>
            <person name="Iida Y."/>
            <person name="Ishikawa K."/>
            <person name="Ito E."/>
            <person name="Kagawa N."/>
            <person name="Kaminaga C."/>
            <person name="Kanehori K."/>
            <person name="Kawakami B."/>
            <person name="Kenmochi K."/>
            <person name="Kimura R."/>
            <person name="Kobayashi M."/>
            <person name="Kuroita T."/>
            <person name="Kuwayama H."/>
            <person name="Maruyama Y."/>
            <person name="Matsuo K."/>
            <person name="Minami K."/>
            <person name="Mitsubori M."/>
            <person name="Mori M."/>
            <person name="Morishita R."/>
            <person name="Murase A."/>
            <person name="Nishikawa A."/>
            <person name="Nishikawa S."/>
            <person name="Okamoto T."/>
            <person name="Sakagami N."/>
            <person name="Sakamoto Y."/>
            <person name="Sasaki Y."/>
            <person name="Seki T."/>
            <person name="Sono S."/>
            <person name="Sugiyama A."/>
            <person name="Sumiya T."/>
            <person name="Takayama T."/>
            <person name="Takayama Y."/>
            <person name="Takeda H."/>
            <person name="Togashi T."/>
            <person name="Yahata K."/>
            <person name="Yamada H."/>
            <person name="Yanagisawa Y."/>
            <person name="Endo Y."/>
            <person name="Imamoto F."/>
            <person name="Kisu Y."/>
            <person name="Tanaka S."/>
            <person name="Isogai T."/>
            <person name="Imai J."/>
            <person name="Watanabe S."/>
            <person name="Nomura N."/>
        </authorList>
    </citation>
    <scope>NUCLEOTIDE SEQUENCE [LARGE SCALE MRNA]</scope>
</reference>
<reference key="7">
    <citation type="journal article" date="2006" name="Nature">
        <title>The DNA sequence and biological annotation of human chromosome 1.</title>
        <authorList>
            <person name="Gregory S.G."/>
            <person name="Barlow K.F."/>
            <person name="McLay K.E."/>
            <person name="Kaul R."/>
            <person name="Swarbreck D."/>
            <person name="Dunham A."/>
            <person name="Scott C.E."/>
            <person name="Howe K.L."/>
            <person name="Woodfine K."/>
            <person name="Spencer C.C.A."/>
            <person name="Jones M.C."/>
            <person name="Gillson C."/>
            <person name="Searle S."/>
            <person name="Zhou Y."/>
            <person name="Kokocinski F."/>
            <person name="McDonald L."/>
            <person name="Evans R."/>
            <person name="Phillips K."/>
            <person name="Atkinson A."/>
            <person name="Cooper R."/>
            <person name="Jones C."/>
            <person name="Hall R.E."/>
            <person name="Andrews T.D."/>
            <person name="Lloyd C."/>
            <person name="Ainscough R."/>
            <person name="Almeida J.P."/>
            <person name="Ambrose K.D."/>
            <person name="Anderson F."/>
            <person name="Andrew R.W."/>
            <person name="Ashwell R.I.S."/>
            <person name="Aubin K."/>
            <person name="Babbage A.K."/>
            <person name="Bagguley C.L."/>
            <person name="Bailey J."/>
            <person name="Beasley H."/>
            <person name="Bethel G."/>
            <person name="Bird C.P."/>
            <person name="Bray-Allen S."/>
            <person name="Brown J.Y."/>
            <person name="Brown A.J."/>
            <person name="Buckley D."/>
            <person name="Burton J."/>
            <person name="Bye J."/>
            <person name="Carder C."/>
            <person name="Chapman J.C."/>
            <person name="Clark S.Y."/>
            <person name="Clarke G."/>
            <person name="Clee C."/>
            <person name="Cobley V."/>
            <person name="Collier R.E."/>
            <person name="Corby N."/>
            <person name="Coville G.J."/>
            <person name="Davies J."/>
            <person name="Deadman R."/>
            <person name="Dunn M."/>
            <person name="Earthrowl M."/>
            <person name="Ellington A.G."/>
            <person name="Errington H."/>
            <person name="Frankish A."/>
            <person name="Frankland J."/>
            <person name="French L."/>
            <person name="Garner P."/>
            <person name="Garnett J."/>
            <person name="Gay L."/>
            <person name="Ghori M.R.J."/>
            <person name="Gibson R."/>
            <person name="Gilby L.M."/>
            <person name="Gillett W."/>
            <person name="Glithero R.J."/>
            <person name="Grafham D.V."/>
            <person name="Griffiths C."/>
            <person name="Griffiths-Jones S."/>
            <person name="Grocock R."/>
            <person name="Hammond S."/>
            <person name="Harrison E.S.I."/>
            <person name="Hart E."/>
            <person name="Haugen E."/>
            <person name="Heath P.D."/>
            <person name="Holmes S."/>
            <person name="Holt K."/>
            <person name="Howden P.J."/>
            <person name="Hunt A.R."/>
            <person name="Hunt S.E."/>
            <person name="Hunter G."/>
            <person name="Isherwood J."/>
            <person name="James R."/>
            <person name="Johnson C."/>
            <person name="Johnson D."/>
            <person name="Joy A."/>
            <person name="Kay M."/>
            <person name="Kershaw J.K."/>
            <person name="Kibukawa M."/>
            <person name="Kimberley A.M."/>
            <person name="King A."/>
            <person name="Knights A.J."/>
            <person name="Lad H."/>
            <person name="Laird G."/>
            <person name="Lawlor S."/>
            <person name="Leongamornlert D.A."/>
            <person name="Lloyd D.M."/>
            <person name="Loveland J."/>
            <person name="Lovell J."/>
            <person name="Lush M.J."/>
            <person name="Lyne R."/>
            <person name="Martin S."/>
            <person name="Mashreghi-Mohammadi M."/>
            <person name="Matthews L."/>
            <person name="Matthews N.S.W."/>
            <person name="McLaren S."/>
            <person name="Milne S."/>
            <person name="Mistry S."/>
            <person name="Moore M.J.F."/>
            <person name="Nickerson T."/>
            <person name="O'Dell C.N."/>
            <person name="Oliver K."/>
            <person name="Palmeiri A."/>
            <person name="Palmer S.A."/>
            <person name="Parker A."/>
            <person name="Patel D."/>
            <person name="Pearce A.V."/>
            <person name="Peck A.I."/>
            <person name="Pelan S."/>
            <person name="Phelps K."/>
            <person name="Phillimore B.J."/>
            <person name="Plumb R."/>
            <person name="Rajan J."/>
            <person name="Raymond C."/>
            <person name="Rouse G."/>
            <person name="Saenphimmachak C."/>
            <person name="Sehra H.K."/>
            <person name="Sheridan E."/>
            <person name="Shownkeen R."/>
            <person name="Sims S."/>
            <person name="Skuce C.D."/>
            <person name="Smith M."/>
            <person name="Steward C."/>
            <person name="Subramanian S."/>
            <person name="Sycamore N."/>
            <person name="Tracey A."/>
            <person name="Tromans A."/>
            <person name="Van Helmond Z."/>
            <person name="Wall M."/>
            <person name="Wallis J.M."/>
            <person name="White S."/>
            <person name="Whitehead S.L."/>
            <person name="Wilkinson J.E."/>
            <person name="Willey D.L."/>
            <person name="Williams H."/>
            <person name="Wilming L."/>
            <person name="Wray P.W."/>
            <person name="Wu Z."/>
            <person name="Coulson A."/>
            <person name="Vaudin M."/>
            <person name="Sulston J.E."/>
            <person name="Durbin R.M."/>
            <person name="Hubbard T."/>
            <person name="Wooster R."/>
            <person name="Dunham I."/>
            <person name="Carter N.P."/>
            <person name="McVean G."/>
            <person name="Ross M.T."/>
            <person name="Harrow J."/>
            <person name="Olson M.V."/>
            <person name="Beck S."/>
            <person name="Rogers J."/>
            <person name="Bentley D.R."/>
        </authorList>
    </citation>
    <scope>NUCLEOTIDE SEQUENCE [LARGE SCALE GENOMIC DNA]</scope>
</reference>
<reference key="8">
    <citation type="submission" date="2005-09" db="EMBL/GenBank/DDBJ databases">
        <authorList>
            <person name="Mural R.J."/>
            <person name="Istrail S."/>
            <person name="Sutton G.G."/>
            <person name="Florea L."/>
            <person name="Halpern A.L."/>
            <person name="Mobarry C.M."/>
            <person name="Lippert R."/>
            <person name="Walenz B."/>
            <person name="Shatkay H."/>
            <person name="Dew I."/>
            <person name="Miller J.R."/>
            <person name="Flanigan M.J."/>
            <person name="Edwards N.J."/>
            <person name="Bolanos R."/>
            <person name="Fasulo D."/>
            <person name="Halldorsson B.V."/>
            <person name="Hannenhalli S."/>
            <person name="Turner R."/>
            <person name="Yooseph S."/>
            <person name="Lu F."/>
            <person name="Nusskern D.R."/>
            <person name="Shue B.C."/>
            <person name="Zheng X.H."/>
            <person name="Zhong F."/>
            <person name="Delcher A.L."/>
            <person name="Huson D.H."/>
            <person name="Kravitz S.A."/>
            <person name="Mouchard L."/>
            <person name="Reinert K."/>
            <person name="Remington K.A."/>
            <person name="Clark A.G."/>
            <person name="Waterman M.S."/>
            <person name="Eichler E.E."/>
            <person name="Adams M.D."/>
            <person name="Hunkapiller M.W."/>
            <person name="Myers E.W."/>
            <person name="Venter J.C."/>
        </authorList>
    </citation>
    <scope>NUCLEOTIDE SEQUENCE [LARGE SCALE GENOMIC DNA]</scope>
</reference>
<reference key="9">
    <citation type="journal article" date="2004" name="Genome Res.">
        <title>The status, quality, and expansion of the NIH full-length cDNA project: the Mammalian Gene Collection (MGC).</title>
        <authorList>
            <consortium name="The MGC Project Team"/>
        </authorList>
    </citation>
    <scope>NUCLEOTIDE SEQUENCE [LARGE SCALE MRNA]</scope>
    <source>
        <tissue>Urinary bladder</tissue>
    </source>
</reference>
<reference key="10">
    <citation type="submission" date="2008-12" db="UniProtKB">
        <authorList>
            <person name="Lubec G."/>
            <person name="Afjehi-Sadat L."/>
            <person name="Chen W.-Q."/>
            <person name="Sun Y."/>
        </authorList>
    </citation>
    <scope>PROTEIN SEQUENCE OF 17-35; 93-136; 141-151 AND 159-190</scope>
    <scope>IDENTIFICATION BY MASS SPECTROMETRY</scope>
    <source>
        <tissue>Brain</tissue>
        <tissue>Cajal-Retzius cell</tissue>
        <tissue>Fetal brain cortex</tissue>
    </source>
</reference>
<reference key="11">
    <citation type="journal article" date="1998" name="J. Biol. Chem.">
        <title>Mammalian peroxiredoxin isoforms can reduce hydrogen peroxide generated in response to growth factors and tumor necrosis factor-alpha.</title>
        <authorList>
            <person name="Kang S.W."/>
            <person name="Chae H.Z."/>
            <person name="Seo M.S."/>
            <person name="Kim K."/>
            <person name="Baines I.C."/>
            <person name="Rhee S.G."/>
        </authorList>
    </citation>
    <scope>FUNCTION</scope>
    <scope>CATALYTIC ACTIVITY</scope>
    <scope>SUBCELLULAR LOCATION</scope>
</reference>
<reference key="12">
    <citation type="journal article" date="2002" name="Biochem. J.">
        <title>A method for detection of overoxidation of cysteines: peroxiredoxins are oxidized in vivo at the active-site cysteine during oxidative stress.</title>
        <authorList>
            <person name="Wagner E."/>
            <person name="Luche S."/>
            <person name="Penna L."/>
            <person name="Chevallet M."/>
            <person name="van Dorsselaer A."/>
            <person name="Leize-Wagner E."/>
            <person name="Rabilloud T."/>
        </authorList>
    </citation>
    <scope>OVEROXIDATION AT CYS-52</scope>
</reference>
<reference key="13">
    <citation type="journal article" date="2002" name="J. Biol. Chem.">
        <title>Regulation of peroxiredoxin I activity by Cdc2-mediated phosphorylation.</title>
        <authorList>
            <person name="Chang T.-S."/>
            <person name="Jeong W."/>
            <person name="Choi S.Y."/>
            <person name="Yu S."/>
            <person name="Kang S.W."/>
            <person name="Rhee S.G."/>
        </authorList>
    </citation>
    <scope>CATALYTIC ACTIVITY</scope>
    <scope>PHOSPHORYLATION AT THR-90</scope>
    <scope>MUTAGENESIS OF THR-90</scope>
</reference>
<reference key="14">
    <citation type="journal article" date="2002" name="J. Biol. Chem.">
        <title>Inactivation of human peroxiredoxin I during catalysis as the result of the oxidation of the catalytic site cysteine to cysteine-sulfinic acid.</title>
        <authorList>
            <person name="Yang K.S."/>
            <person name="Kang S.W."/>
            <person name="Woo H.A."/>
            <person name="Hwang S.C."/>
            <person name="Chae H.Z."/>
            <person name="Kim K."/>
            <person name="Rhee S.G."/>
        </authorList>
    </citation>
    <scope>OVEROXIDATION AT CYS-52</scope>
</reference>
<reference key="15">
    <citation type="journal article" date="2003" name="J. Biol. Chem.">
        <title>Regeneration of peroxiredoxins during recovery after oxidative stress: only some overoxidized peroxiredoxins can be reduced during recovery after oxidative stress.</title>
        <authorList>
            <person name="Chevallet M."/>
            <person name="Wagner E."/>
            <person name="Luche S."/>
            <person name="van Dorsselaer A."/>
            <person name="Leize-Wagner E."/>
            <person name="Rabilloud T."/>
        </authorList>
    </citation>
    <scope>RETROREDUCTION OF CYS-52</scope>
    <scope>IDENTIFICATION BY MASS SPECTROMETRY</scope>
</reference>
<reference key="16">
    <citation type="journal article" date="2003" name="Nature">
        <title>Proteomic characterization of the human centrosome by protein correlation profiling.</title>
        <authorList>
            <person name="Andersen J.S."/>
            <person name="Wilkinson C.J."/>
            <person name="Mayor T."/>
            <person name="Mortensen P."/>
            <person name="Nigg E.A."/>
            <person name="Mann M."/>
        </authorList>
    </citation>
    <scope>IDENTIFICATION BY MASS SPECTROMETRY</scope>
    <source>
        <tissue>Lymphoblast</tissue>
    </source>
</reference>
<reference key="17">
    <citation type="journal article" date="2003" name="Science">
        <title>Reversing the inactivation of peroxiredoxins caused by cysteine sulfinic acid formation.</title>
        <authorList>
            <person name="Woo H.A."/>
            <person name="Chae H.Z."/>
            <person name="Hwang S.C."/>
            <person name="Yang K.S."/>
            <person name="Kang S.W."/>
            <person name="Kim K."/>
            <person name="Rhee S.G."/>
        </authorList>
    </citation>
    <scope>RETROREDUCTION OF CYS-52</scope>
    <scope>IDENTIFICATION BY MASS SPECTROMETRY</scope>
</reference>
<reference key="18">
    <citation type="journal article" date="2004" name="Science">
        <title>Regeneration of peroxiredoxins by p53-regulated sestrins, homologs of bacterial AhpD.</title>
        <authorList>
            <person name="Budanov A.V."/>
            <person name="Sablina A.A."/>
            <person name="Feinstein E."/>
            <person name="Koonin E.V."/>
            <person name="Chumakov P.M."/>
        </authorList>
    </citation>
    <scope>INTERACTION WITH SESN1 AND SESN2</scope>
</reference>
<reference key="19">
    <citation type="journal article" date="2006" name="J. Proteome Res.">
        <title>Proteomic and bioinformatic characterization of the biogenesis and function of melanosomes.</title>
        <authorList>
            <person name="Chi A."/>
            <person name="Valencia J.C."/>
            <person name="Hu Z.-Z."/>
            <person name="Watabe H."/>
            <person name="Yamaguchi H."/>
            <person name="Mangini N.J."/>
            <person name="Huang H."/>
            <person name="Canfield V.A."/>
            <person name="Cheng K.C."/>
            <person name="Yang F."/>
            <person name="Abe R."/>
            <person name="Yamagishi S."/>
            <person name="Shabanowitz J."/>
            <person name="Hearing V.J."/>
            <person name="Wu C."/>
            <person name="Appella E."/>
            <person name="Hunt D.F."/>
        </authorList>
    </citation>
    <scope>SUBCELLULAR LOCATION [LARGE SCALE ANALYSIS]</scope>
    <source>
        <tissue>Melanoma</tissue>
    </source>
</reference>
<reference key="20">
    <citation type="journal article" date="2008" name="Proc. Natl. Acad. Sci. U.S.A.">
        <title>HDAC6 is a specific deacetylase of peroxiredoxins and is involved in redox regulation.</title>
        <authorList>
            <person name="Parmigiani R.B."/>
            <person name="Xu W.S."/>
            <person name="Venta-Perez G."/>
            <person name="Erdjument-Bromage H."/>
            <person name="Yaneva M."/>
            <person name="Tempst P."/>
            <person name="Marks P.A."/>
        </authorList>
    </citation>
    <scope>ACETYLATION AT LYS-197</scope>
    <scope>DEACETYLATION BY HDAC6</scope>
    <scope>MUTAGENESIS OF LYS-197</scope>
</reference>
<reference key="21">
    <citation type="journal article" date="2009" name="Science">
        <title>Lysine acetylation targets protein complexes and co-regulates major cellular functions.</title>
        <authorList>
            <person name="Choudhary C."/>
            <person name="Kumar C."/>
            <person name="Gnad F."/>
            <person name="Nielsen M.L."/>
            <person name="Rehman M."/>
            <person name="Walther T.C."/>
            <person name="Olsen J.V."/>
            <person name="Mann M."/>
        </authorList>
    </citation>
    <scope>ACETYLATION [LARGE SCALE ANALYSIS] AT LYS-7; LYS-16; LYS-27 AND LYS-35</scope>
    <scope>IDENTIFICATION BY MASS SPECTROMETRY [LARGE SCALE ANALYSIS]</scope>
</reference>
<reference key="22">
    <citation type="journal article" date="2011" name="BMC Syst. Biol.">
        <title>Initial characterization of the human central proteome.</title>
        <authorList>
            <person name="Burkard T.R."/>
            <person name="Planyavsky M."/>
            <person name="Kaupe I."/>
            <person name="Breitwieser F.P."/>
            <person name="Buerckstuemmer T."/>
            <person name="Bennett K.L."/>
            <person name="Superti-Furga G."/>
            <person name="Colinge J."/>
        </authorList>
    </citation>
    <scope>IDENTIFICATION BY MASS SPECTROMETRY [LARGE SCALE ANALYSIS]</scope>
</reference>
<reference key="23">
    <citation type="journal article" date="2011" name="Proc. Natl. Acad. Sci. U.S.A.">
        <title>Tumor suppressor down-regulated in renal cell carcinoma 1 (DRR1) is a stress-induced actin bundling factor that modulates synaptic efficacy and cognition.</title>
        <authorList>
            <person name="Schmidt M.V."/>
            <person name="Schuelke J.P."/>
            <person name="Liebl C."/>
            <person name="Stiess M."/>
            <person name="Avrabos C."/>
            <person name="Bock J."/>
            <person name="Wochnik G.M."/>
            <person name="Davies H.A."/>
            <person name="Zimmermann N."/>
            <person name="Scharf S.H."/>
            <person name="Truembach D."/>
            <person name="Wurst W."/>
            <person name="Zieglgaensberger W."/>
            <person name="Turck C."/>
            <person name="Holsboer F."/>
            <person name="Stewart M.G."/>
            <person name="Bradke F."/>
            <person name="Eder M."/>
            <person name="Mueller M.B."/>
            <person name="Rein T."/>
        </authorList>
    </citation>
    <scope>INTERACTION WITH FAM107A</scope>
</reference>
<reference key="24">
    <citation type="journal article" date="2012" name="J. Proteome Res.">
        <title>Resveratrol-induced changes of the human adipocyte secretion profile.</title>
        <authorList>
            <person name="Rosenow A."/>
            <person name="Noben J.P."/>
            <person name="Jocken J."/>
            <person name="Kallendrusch S."/>
            <person name="Fischer-Posovszky P."/>
            <person name="Mariman E.C."/>
            <person name="Renes J."/>
        </authorList>
    </citation>
    <scope>IDENTIFICATION BY MASS SPECTROMETRY [LARGE SCALE ANALYSIS]</scope>
</reference>
<reference key="25">
    <citation type="journal article" date="2013" name="J. Proteome Res.">
        <title>Toward a comprehensive characterization of a human cancer cell phosphoproteome.</title>
        <authorList>
            <person name="Zhou H."/>
            <person name="Di Palma S."/>
            <person name="Preisinger C."/>
            <person name="Peng M."/>
            <person name="Polat A.N."/>
            <person name="Heck A.J."/>
            <person name="Mohammed S."/>
        </authorList>
    </citation>
    <scope>PHOSPHORYLATION [LARGE SCALE ANALYSIS] AT SER-32</scope>
    <scope>IDENTIFICATION BY MASS SPECTROMETRY [LARGE SCALE ANALYSIS]</scope>
    <source>
        <tissue>Erythroleukemia</tissue>
    </source>
</reference>
<reference key="26">
    <citation type="journal article" date="2014" name="J. Proteomics">
        <title>An enzyme assisted RP-RPLC approach for in-depth analysis of human liver phosphoproteome.</title>
        <authorList>
            <person name="Bian Y."/>
            <person name="Song C."/>
            <person name="Cheng K."/>
            <person name="Dong M."/>
            <person name="Wang F."/>
            <person name="Huang J."/>
            <person name="Sun D."/>
            <person name="Wang L."/>
            <person name="Ye M."/>
            <person name="Zou H."/>
        </authorList>
    </citation>
    <scope>PHOSPHORYLATION [LARGE SCALE ANALYSIS] AT SER-32</scope>
    <scope>IDENTIFICATION BY MASS SPECTROMETRY [LARGE SCALE ANALYSIS]</scope>
    <source>
        <tissue>Liver</tissue>
    </source>
</reference>
<reference key="27">
    <citation type="journal article" date="2014" name="Proc. Natl. Acad. Sci. U.S.A.">
        <title>Mapping of SUMO sites and analysis of SUMOylation changes induced by external stimuli.</title>
        <authorList>
            <person name="Impens F."/>
            <person name="Radoshevich L."/>
            <person name="Cossart P."/>
            <person name="Ribet D."/>
        </authorList>
    </citation>
    <scope>SUMOYLATION [LARGE SCALE ANALYSIS] AT LYS-185</scope>
    <scope>IDENTIFICATION BY MASS SPECTROMETRY [LARGE SCALE ANALYSIS]</scope>
</reference>
<reference key="28">
    <citation type="journal article" date="2015" name="Proteomics">
        <title>N-terminome analysis of the human mitochondrial proteome.</title>
        <authorList>
            <person name="Vaca Jacome A.S."/>
            <person name="Rabilloud T."/>
            <person name="Schaeffer-Reiss C."/>
            <person name="Rompais M."/>
            <person name="Ayoub D."/>
            <person name="Lane L."/>
            <person name="Bairoch A."/>
            <person name="Van Dorsselaer A."/>
            <person name="Carapito C."/>
        </authorList>
    </citation>
    <scope>ACETYLATION [LARGE SCALE ANALYSIS] AT SER-2</scope>
    <scope>CLEAVAGE OF INITIATOR METHIONINE [LARGE SCALE ANALYSIS]</scope>
    <scope>IDENTIFICATION BY MASS SPECTROMETRY [LARGE SCALE ANALYSIS]</scope>
</reference>
<reference key="29">
    <citation type="journal article" date="2017" name="Nat. Struct. Mol. Biol.">
        <title>Site-specific mapping of the human SUMO proteome reveals co-modification with phosphorylation.</title>
        <authorList>
            <person name="Hendriks I.A."/>
            <person name="Lyon D."/>
            <person name="Young C."/>
            <person name="Jensen L.J."/>
            <person name="Vertegaal A.C."/>
            <person name="Nielsen M.L."/>
        </authorList>
    </citation>
    <scope>SUMOYLATION [LARGE SCALE ANALYSIS] AT LYS-7 AND LYS-120</scope>
    <scope>IDENTIFICATION BY MASS SPECTROMETRY [LARGE SCALE ANALYSIS]</scope>
</reference>
<reference key="30">
    <citation type="journal article" date="2008" name="Nature">
        <title>Structure of the sulphiredoxin-peroxiredoxin complex reveals an essential repair embrace.</title>
        <authorList>
            <person name="Joensson T.J."/>
            <person name="Johnson L.C."/>
            <person name="Lowther W.T."/>
        </authorList>
    </citation>
    <scope>X-RAY CRYSTALLOGRAPHY (2.60 ANGSTROMS) IN COMPLEX WITH SRXN1</scope>
    <scope>SUBUNIT</scope>
</reference>
<reference key="31">
    <citation type="journal article" date="2009" name="J. Biol. Chem.">
        <title>Protein engineering of the quaternary sulfiredoxin.peroxiredoxin enzyme.substrate complex reveals the molecular basis for cysteine sulfinic acid phosphorylation.</title>
        <authorList>
            <person name="Joensson T.J."/>
            <person name="Johnson L.C."/>
            <person name="Lowther W.T."/>
        </authorList>
    </citation>
    <scope>X-RAY CRYSTALLOGRAPHY (2.10 ANGSTROMS)</scope>
</reference>
<reference evidence="23" key="32">
    <citation type="journal article" date="2015" name="Bull. Korean Chem. Soc.">
        <title>Crystal structure of dimeric human peroxiredoxin-1 C83S mutant.</title>
        <authorList>
            <person name="Cho K.J."/>
            <person name="Park Y."/>
            <person name="Khan T.G."/>
            <person name="Lee J.-H."/>
            <person name="Kim S."/>
            <person name="Seok J.H."/>
            <person name="Chung Y.B."/>
            <person name="Cho A.E."/>
            <person name="Choi Y."/>
            <person name="Chang T.-S."/>
            <person name="Kim K.H."/>
        </authorList>
    </citation>
    <scope>X-RAY CRYSTALLOGRAPHY (2.10 ANGSTROMS)</scope>
    <scope>DISULFIDE BONDS</scope>
</reference>
<dbReference type="EC" id="1.11.1.24" evidence="5 16"/>
<dbReference type="EMBL" id="X67951">
    <property type="protein sequence ID" value="CAA48137.1"/>
    <property type="molecule type" value="mRNA"/>
</dbReference>
<dbReference type="EMBL" id="L19184">
    <property type="protein sequence ID" value="AAA50464.1"/>
    <property type="molecule type" value="mRNA"/>
</dbReference>
<dbReference type="EMBL" id="BT019740">
    <property type="protein sequence ID" value="AAV38545.1"/>
    <property type="molecule type" value="mRNA"/>
</dbReference>
<dbReference type="EMBL" id="CR407652">
    <property type="protein sequence ID" value="CAG28580.1"/>
    <property type="molecule type" value="mRNA"/>
</dbReference>
<dbReference type="EMBL" id="DQ297142">
    <property type="protein sequence ID" value="ABB84465.1"/>
    <property type="molecule type" value="Genomic_DNA"/>
</dbReference>
<dbReference type="EMBL" id="AB451262">
    <property type="protein sequence ID" value="BAG70076.1"/>
    <property type="molecule type" value="mRNA"/>
</dbReference>
<dbReference type="EMBL" id="AB451388">
    <property type="protein sequence ID" value="BAG70202.1"/>
    <property type="molecule type" value="mRNA"/>
</dbReference>
<dbReference type="EMBL" id="AL451136">
    <property type="status" value="NOT_ANNOTATED_CDS"/>
    <property type="molecule type" value="Genomic_DNA"/>
</dbReference>
<dbReference type="EMBL" id="CH471059">
    <property type="protein sequence ID" value="EAX06975.1"/>
    <property type="molecule type" value="Genomic_DNA"/>
</dbReference>
<dbReference type="EMBL" id="CH471059">
    <property type="protein sequence ID" value="EAX06976.1"/>
    <property type="molecule type" value="Genomic_DNA"/>
</dbReference>
<dbReference type="EMBL" id="CH471059">
    <property type="protein sequence ID" value="EAX06978.1"/>
    <property type="molecule type" value="Genomic_DNA"/>
</dbReference>
<dbReference type="EMBL" id="CH471059">
    <property type="protein sequence ID" value="EAX06979.1"/>
    <property type="molecule type" value="Genomic_DNA"/>
</dbReference>
<dbReference type="EMBL" id="CH471059">
    <property type="protein sequence ID" value="EAX06980.1"/>
    <property type="molecule type" value="Genomic_DNA"/>
</dbReference>
<dbReference type="EMBL" id="CH471059">
    <property type="protein sequence ID" value="EAX06981.1"/>
    <property type="molecule type" value="Genomic_DNA"/>
</dbReference>
<dbReference type="EMBL" id="CH471059">
    <property type="protein sequence ID" value="EAX06982.1"/>
    <property type="molecule type" value="Genomic_DNA"/>
</dbReference>
<dbReference type="EMBL" id="BC007063">
    <property type="protein sequence ID" value="AAH07063.1"/>
    <property type="molecule type" value="mRNA"/>
</dbReference>
<dbReference type="EMBL" id="BC021683">
    <property type="protein sequence ID" value="AAH21683.1"/>
    <property type="molecule type" value="mRNA"/>
</dbReference>
<dbReference type="CCDS" id="CCDS522.1"/>
<dbReference type="PIR" id="A46711">
    <property type="entry name" value="A46711"/>
</dbReference>
<dbReference type="RefSeq" id="NP_001189360.1">
    <property type="nucleotide sequence ID" value="NM_001202431.2"/>
</dbReference>
<dbReference type="RefSeq" id="NP_002565.1">
    <property type="nucleotide sequence ID" value="NM_002574.4"/>
</dbReference>
<dbReference type="RefSeq" id="NP_859047.1">
    <property type="nucleotide sequence ID" value="NM_181696.3"/>
</dbReference>
<dbReference type="RefSeq" id="NP_859048.1">
    <property type="nucleotide sequence ID" value="NM_181697.3"/>
</dbReference>
<dbReference type="PDB" id="2RII">
    <property type="method" value="X-ray"/>
    <property type="resolution" value="2.60 A"/>
    <property type="chains" value="A/B=1-199"/>
</dbReference>
<dbReference type="PDB" id="3HY2">
    <property type="method" value="X-ray"/>
    <property type="resolution" value="2.10 A"/>
    <property type="chains" value="A/B=1-199"/>
</dbReference>
<dbReference type="PDB" id="4XCS">
    <property type="method" value="X-ray"/>
    <property type="resolution" value="2.10 A"/>
    <property type="chains" value="A/B/C/D/E/F=1-199"/>
</dbReference>
<dbReference type="PDB" id="7LJ1">
    <property type="method" value="X-ray"/>
    <property type="resolution" value="2.97 A"/>
    <property type="chains" value="A/B/C/D/E/F/G/H/I/J/K/L/M/N/O/P/Q/R/S/T=1-199"/>
</dbReference>
<dbReference type="PDB" id="7WET">
    <property type="method" value="X-ray"/>
    <property type="resolution" value="1.76 A"/>
    <property type="chains" value="A/B=1-175"/>
</dbReference>
<dbReference type="PDB" id="7WEU">
    <property type="method" value="X-ray"/>
    <property type="resolution" value="1.81 A"/>
    <property type="chains" value="A/B=1-175"/>
</dbReference>
<dbReference type="PDB" id="8X71">
    <property type="method" value="X-ray"/>
    <property type="resolution" value="1.58 A"/>
    <property type="chains" value="A/B=1-175"/>
</dbReference>
<dbReference type="PDB" id="8X73">
    <property type="method" value="X-ray"/>
    <property type="resolution" value="1.61 A"/>
    <property type="chains" value="A/B=1-175"/>
</dbReference>
<dbReference type="PDB" id="8Z54">
    <property type="method" value="X-ray"/>
    <property type="resolution" value="1.45 A"/>
    <property type="chains" value="B=191-199"/>
</dbReference>
<dbReference type="PDB" id="8Z55">
    <property type="method" value="X-ray"/>
    <property type="resolution" value="1.83 A"/>
    <property type="chains" value="B=191-199"/>
</dbReference>
<dbReference type="PDB" id="8Z56">
    <property type="method" value="X-ray"/>
    <property type="resolution" value="1.81 A"/>
    <property type="chains" value="B=191-199"/>
</dbReference>
<dbReference type="PDB" id="8Z57">
    <property type="method" value="X-ray"/>
    <property type="resolution" value="1.96 A"/>
    <property type="chains" value="B=191-199"/>
</dbReference>
<dbReference type="PDB" id="8Z58">
    <property type="method" value="X-ray"/>
    <property type="resolution" value="2.40 A"/>
    <property type="chains" value="B=191-199"/>
</dbReference>
<dbReference type="PDB" id="9B7A">
    <property type="method" value="X-ray"/>
    <property type="resolution" value="1.71 A"/>
    <property type="chains" value="A/B=1-175"/>
</dbReference>
<dbReference type="PDBsum" id="2RII"/>
<dbReference type="PDBsum" id="3HY2"/>
<dbReference type="PDBsum" id="4XCS"/>
<dbReference type="PDBsum" id="7LJ1"/>
<dbReference type="PDBsum" id="7WET"/>
<dbReference type="PDBsum" id="7WEU"/>
<dbReference type="PDBsum" id="8X71"/>
<dbReference type="PDBsum" id="8X73"/>
<dbReference type="PDBsum" id="8Z54"/>
<dbReference type="PDBsum" id="8Z55"/>
<dbReference type="PDBsum" id="8Z56"/>
<dbReference type="PDBsum" id="8Z57"/>
<dbReference type="PDBsum" id="8Z58"/>
<dbReference type="PDBsum" id="9B7A"/>
<dbReference type="SMR" id="Q06830"/>
<dbReference type="BioGRID" id="111089">
    <property type="interactions" value="403"/>
</dbReference>
<dbReference type="CORUM" id="Q06830"/>
<dbReference type="DIP" id="DIP-33152N"/>
<dbReference type="FunCoup" id="Q06830">
    <property type="interactions" value="1414"/>
</dbReference>
<dbReference type="IntAct" id="Q06830">
    <property type="interactions" value="134"/>
</dbReference>
<dbReference type="MINT" id="Q06830"/>
<dbReference type="STRING" id="9606.ENSP00000262746"/>
<dbReference type="BindingDB" id="Q06830"/>
<dbReference type="ChEMBL" id="CHEMBL5315"/>
<dbReference type="DrugBank" id="DB11638">
    <property type="generic name" value="Artenimol"/>
</dbReference>
<dbReference type="DrugBank" id="DB09130">
    <property type="generic name" value="Copper"/>
</dbReference>
<dbReference type="DrugBank" id="DB09221">
    <property type="generic name" value="Polaprezinc"/>
</dbReference>
<dbReference type="DrugBank" id="DB01593">
    <property type="generic name" value="Zinc"/>
</dbReference>
<dbReference type="DrugBank" id="DB14487">
    <property type="generic name" value="Zinc acetate"/>
</dbReference>
<dbReference type="DrugBank" id="DB14533">
    <property type="generic name" value="Zinc chloride"/>
</dbReference>
<dbReference type="DrugBank" id="DB14548">
    <property type="generic name" value="Zinc sulfate, unspecified form"/>
</dbReference>
<dbReference type="PeroxiBase" id="4501">
    <property type="entry name" value="Hs2CysPrx01"/>
</dbReference>
<dbReference type="GlyGen" id="Q06830">
    <property type="glycosylation" value="1 site, 1 O-linked glycan (1 site)"/>
</dbReference>
<dbReference type="iPTMnet" id="Q06830"/>
<dbReference type="MetOSite" id="Q06830"/>
<dbReference type="PhosphoSitePlus" id="Q06830"/>
<dbReference type="SwissPalm" id="Q06830"/>
<dbReference type="BioMuta" id="PRDX1"/>
<dbReference type="DMDM" id="548453"/>
<dbReference type="OGP" id="Q06830"/>
<dbReference type="jPOST" id="Q06830"/>
<dbReference type="MassIVE" id="Q06830"/>
<dbReference type="PaxDb" id="9606-ENSP00000262746"/>
<dbReference type="PeptideAtlas" id="Q06830"/>
<dbReference type="ProteomicsDB" id="58486"/>
<dbReference type="TopDownProteomics" id="Q06830"/>
<dbReference type="Antibodypedia" id="1574">
    <property type="antibodies" value="687 antibodies from 45 providers"/>
</dbReference>
<dbReference type="DNASU" id="5052"/>
<dbReference type="Ensembl" id="ENST00000262746.5">
    <property type="protein sequence ID" value="ENSP00000262746.1"/>
    <property type="gene ID" value="ENSG00000117450.15"/>
</dbReference>
<dbReference type="Ensembl" id="ENST00000319248.13">
    <property type="protein sequence ID" value="ENSP00000361152.5"/>
    <property type="gene ID" value="ENSG00000117450.15"/>
</dbReference>
<dbReference type="Ensembl" id="ENST00000424390.2">
    <property type="protein sequence ID" value="ENSP00000389047.2"/>
    <property type="gene ID" value="ENSG00000117450.15"/>
</dbReference>
<dbReference type="Ensembl" id="ENST00000447184.6">
    <property type="protein sequence ID" value="ENSP00000407034.2"/>
    <property type="gene ID" value="ENSG00000117450.15"/>
</dbReference>
<dbReference type="Ensembl" id="ENST00000676549.1">
    <property type="protein sequence ID" value="ENSP00000503140.1"/>
    <property type="gene ID" value="ENSG00000117450.15"/>
</dbReference>
<dbReference type="GeneID" id="5052"/>
<dbReference type="KEGG" id="hsa:5052"/>
<dbReference type="MANE-Select" id="ENST00000319248.13">
    <property type="protein sequence ID" value="ENSP00000361152.5"/>
    <property type="RefSeq nucleotide sequence ID" value="NM_181697.3"/>
    <property type="RefSeq protein sequence ID" value="NP_859048.1"/>
</dbReference>
<dbReference type="UCSC" id="uc001coa.4">
    <property type="organism name" value="human"/>
</dbReference>
<dbReference type="AGR" id="HGNC:9352"/>
<dbReference type="CTD" id="5052"/>
<dbReference type="DisGeNET" id="5052"/>
<dbReference type="GeneCards" id="PRDX1"/>
<dbReference type="HGNC" id="HGNC:9352">
    <property type="gene designation" value="PRDX1"/>
</dbReference>
<dbReference type="HPA" id="ENSG00000117450">
    <property type="expression patterns" value="Low tissue specificity"/>
</dbReference>
<dbReference type="MalaCards" id="PRDX1"/>
<dbReference type="MIM" id="176763">
    <property type="type" value="gene"/>
</dbReference>
<dbReference type="neXtProt" id="NX_Q06830"/>
<dbReference type="OpenTargets" id="ENSG00000117450"/>
<dbReference type="PharmGKB" id="PA33722"/>
<dbReference type="VEuPathDB" id="HostDB:ENSG00000117450"/>
<dbReference type="eggNOG" id="KOG0852">
    <property type="taxonomic scope" value="Eukaryota"/>
</dbReference>
<dbReference type="GeneTree" id="ENSGT00940000154277"/>
<dbReference type="InParanoid" id="Q06830"/>
<dbReference type="OMA" id="FWYPKDF"/>
<dbReference type="OrthoDB" id="185659at2759"/>
<dbReference type="PAN-GO" id="Q06830">
    <property type="GO annotations" value="8 GO annotations based on evolutionary models"/>
</dbReference>
<dbReference type="PhylomeDB" id="Q06830"/>
<dbReference type="TreeFam" id="TF105181"/>
<dbReference type="BioCyc" id="MetaCyc:HS04134-MONOMER"/>
<dbReference type="BRENDA" id="1.11.1.24">
    <property type="organism ID" value="2681"/>
</dbReference>
<dbReference type="PathwayCommons" id="Q06830"/>
<dbReference type="Reactome" id="R-HSA-3299685">
    <property type="pathway name" value="Detoxification of Reactive Oxygen Species"/>
</dbReference>
<dbReference type="Reactome" id="R-HSA-5628897">
    <property type="pathway name" value="TP53 Regulates Metabolic Genes"/>
</dbReference>
<dbReference type="Reactome" id="R-HSA-8862803">
    <property type="pathway name" value="Deregulated CDK5 triggers multiple neurodegenerative pathways in Alzheimer's disease models"/>
</dbReference>
<dbReference type="Reactome" id="R-HSA-9818027">
    <property type="pathway name" value="NFE2L2 regulating anti-oxidant/detoxification enzymes"/>
</dbReference>
<dbReference type="SignaLink" id="Q06830"/>
<dbReference type="SIGNOR" id="Q06830"/>
<dbReference type="BioGRID-ORCS" id="5052">
    <property type="hits" value="73 hits in 1171 CRISPR screens"/>
</dbReference>
<dbReference type="CD-CODE" id="91857CE7">
    <property type="entry name" value="Nucleolus"/>
</dbReference>
<dbReference type="CD-CODE" id="DEE660B4">
    <property type="entry name" value="Stress granule"/>
</dbReference>
<dbReference type="CD-CODE" id="FB4E32DD">
    <property type="entry name" value="Presynaptic clusters and postsynaptic densities"/>
</dbReference>
<dbReference type="ChiTaRS" id="PRDX1">
    <property type="organism name" value="human"/>
</dbReference>
<dbReference type="EvolutionaryTrace" id="Q06830"/>
<dbReference type="GeneWiki" id="Peroxiredoxin_1"/>
<dbReference type="GenomeRNAi" id="5052"/>
<dbReference type="Pharos" id="Q06830">
    <property type="development level" value="Tchem"/>
</dbReference>
<dbReference type="PRO" id="PR:Q06830"/>
<dbReference type="Proteomes" id="UP000005640">
    <property type="component" value="Chromosome 1"/>
</dbReference>
<dbReference type="RNAct" id="Q06830">
    <property type="molecule type" value="protein"/>
</dbReference>
<dbReference type="Bgee" id="ENSG00000117450">
    <property type="expression patterns" value="Expressed in right lobe of thyroid gland and 207 other cell types or tissues"/>
</dbReference>
<dbReference type="ExpressionAtlas" id="Q06830">
    <property type="expression patterns" value="baseline and differential"/>
</dbReference>
<dbReference type="GO" id="GO:0005737">
    <property type="term" value="C:cytoplasm"/>
    <property type="evidence" value="ECO:0000314"/>
    <property type="project" value="MGI"/>
</dbReference>
<dbReference type="GO" id="GO:0005829">
    <property type="term" value="C:cytosol"/>
    <property type="evidence" value="ECO:0000318"/>
    <property type="project" value="GO_Central"/>
</dbReference>
<dbReference type="GO" id="GO:0070062">
    <property type="term" value="C:extracellular exosome"/>
    <property type="evidence" value="ECO:0007005"/>
    <property type="project" value="UniProtKB"/>
</dbReference>
<dbReference type="GO" id="GO:0005615">
    <property type="term" value="C:extracellular space"/>
    <property type="evidence" value="ECO:0007005"/>
    <property type="project" value="UniProtKB"/>
</dbReference>
<dbReference type="GO" id="GO:0042470">
    <property type="term" value="C:melanosome"/>
    <property type="evidence" value="ECO:0007669"/>
    <property type="project" value="UniProtKB-SubCell"/>
</dbReference>
<dbReference type="GO" id="GO:0005634">
    <property type="term" value="C:nucleus"/>
    <property type="evidence" value="ECO:0000314"/>
    <property type="project" value="MGI"/>
</dbReference>
<dbReference type="GO" id="GO:0045296">
    <property type="term" value="F:cadherin binding"/>
    <property type="evidence" value="ECO:0007005"/>
    <property type="project" value="BHF-UCL"/>
</dbReference>
<dbReference type="GO" id="GO:0042802">
    <property type="term" value="F:identical protein binding"/>
    <property type="evidence" value="ECO:0007669"/>
    <property type="project" value="Ensembl"/>
</dbReference>
<dbReference type="GO" id="GO:0004601">
    <property type="term" value="F:peroxidase activity"/>
    <property type="evidence" value="ECO:0000314"/>
    <property type="project" value="MGI"/>
</dbReference>
<dbReference type="GO" id="GO:0003723">
    <property type="term" value="F:RNA binding"/>
    <property type="evidence" value="ECO:0007005"/>
    <property type="project" value="UniProtKB"/>
</dbReference>
<dbReference type="GO" id="GO:0008379">
    <property type="term" value="F:thioredoxin peroxidase activity"/>
    <property type="evidence" value="ECO:0000314"/>
    <property type="project" value="BHF-UCL"/>
</dbReference>
<dbReference type="GO" id="GO:0007249">
    <property type="term" value="P:canonical NF-kappaB signal transduction"/>
    <property type="evidence" value="ECO:0007669"/>
    <property type="project" value="Ensembl"/>
</dbReference>
<dbReference type="GO" id="GO:0008283">
    <property type="term" value="P:cell population proliferation"/>
    <property type="evidence" value="ECO:0000304"/>
    <property type="project" value="ProtInc"/>
</dbReference>
<dbReference type="GO" id="GO:0045454">
    <property type="term" value="P:cell redox homeostasis"/>
    <property type="evidence" value="ECO:0000318"/>
    <property type="project" value="GO_Central"/>
</dbReference>
<dbReference type="GO" id="GO:0034101">
    <property type="term" value="P:erythrocyte homeostasis"/>
    <property type="evidence" value="ECO:0007669"/>
    <property type="project" value="Ensembl"/>
</dbReference>
<dbReference type="GO" id="GO:0048144">
    <property type="term" value="P:fibroblast proliferation"/>
    <property type="evidence" value="ECO:0007669"/>
    <property type="project" value="Ensembl"/>
</dbReference>
<dbReference type="GO" id="GO:0042744">
    <property type="term" value="P:hydrogen peroxide catabolic process"/>
    <property type="evidence" value="ECO:0000314"/>
    <property type="project" value="MGI"/>
</dbReference>
<dbReference type="GO" id="GO:0045321">
    <property type="term" value="P:leukocyte activation"/>
    <property type="evidence" value="ECO:0000318"/>
    <property type="project" value="GO_Central"/>
</dbReference>
<dbReference type="GO" id="GO:0030101">
    <property type="term" value="P:natural killer cell activation"/>
    <property type="evidence" value="ECO:0000314"/>
    <property type="project" value="UniProtKB"/>
</dbReference>
<dbReference type="GO" id="GO:0042267">
    <property type="term" value="P:natural killer cell mediated cytotoxicity"/>
    <property type="evidence" value="ECO:0007669"/>
    <property type="project" value="Ensembl"/>
</dbReference>
<dbReference type="GO" id="GO:1901222">
    <property type="term" value="P:regulation of non-canonical NF-kappaB signal transduction"/>
    <property type="evidence" value="ECO:0007669"/>
    <property type="project" value="Ensembl"/>
</dbReference>
<dbReference type="GO" id="GO:0032872">
    <property type="term" value="P:regulation of stress-activated MAPK cascade"/>
    <property type="evidence" value="ECO:0007669"/>
    <property type="project" value="Ensembl"/>
</dbReference>
<dbReference type="GO" id="GO:0019430">
    <property type="term" value="P:removal of superoxide radicals"/>
    <property type="evidence" value="ECO:0000318"/>
    <property type="project" value="GO_Central"/>
</dbReference>
<dbReference type="GO" id="GO:0006979">
    <property type="term" value="P:response to oxidative stress"/>
    <property type="evidence" value="ECO:0000318"/>
    <property type="project" value="GO_Central"/>
</dbReference>
<dbReference type="GO" id="GO:0001501">
    <property type="term" value="P:skeletal system development"/>
    <property type="evidence" value="ECO:0000304"/>
    <property type="project" value="ProtInc"/>
</dbReference>
<dbReference type="CDD" id="cd03015">
    <property type="entry name" value="PRX_Typ2cys"/>
    <property type="match status" value="1"/>
</dbReference>
<dbReference type="FunFam" id="3.40.30.10:FF:000529">
    <property type="entry name" value="Peroxiredoxin 1"/>
    <property type="match status" value="1"/>
</dbReference>
<dbReference type="Gene3D" id="3.40.30.10">
    <property type="entry name" value="Glutaredoxin"/>
    <property type="match status" value="1"/>
</dbReference>
<dbReference type="InterPro" id="IPR000866">
    <property type="entry name" value="AhpC/TSA"/>
</dbReference>
<dbReference type="InterPro" id="IPR050217">
    <property type="entry name" value="Peroxiredoxin"/>
</dbReference>
<dbReference type="InterPro" id="IPR024706">
    <property type="entry name" value="Peroxiredoxin_AhpC-typ"/>
</dbReference>
<dbReference type="InterPro" id="IPR019479">
    <property type="entry name" value="Peroxiredoxin_C"/>
</dbReference>
<dbReference type="InterPro" id="IPR036249">
    <property type="entry name" value="Thioredoxin-like_sf"/>
</dbReference>
<dbReference type="InterPro" id="IPR013766">
    <property type="entry name" value="Thioredoxin_domain"/>
</dbReference>
<dbReference type="PANTHER" id="PTHR10681:SF111">
    <property type="entry name" value="PEROXIREDOXIN-1"/>
    <property type="match status" value="1"/>
</dbReference>
<dbReference type="PANTHER" id="PTHR10681">
    <property type="entry name" value="THIOREDOXIN PEROXIDASE"/>
    <property type="match status" value="1"/>
</dbReference>
<dbReference type="Pfam" id="PF10417">
    <property type="entry name" value="1-cysPrx_C"/>
    <property type="match status" value="1"/>
</dbReference>
<dbReference type="Pfam" id="PF00578">
    <property type="entry name" value="AhpC-TSA"/>
    <property type="match status" value="1"/>
</dbReference>
<dbReference type="PIRSF" id="PIRSF000239">
    <property type="entry name" value="AHPC"/>
    <property type="match status" value="1"/>
</dbReference>
<dbReference type="SUPFAM" id="SSF52833">
    <property type="entry name" value="Thioredoxin-like"/>
    <property type="match status" value="1"/>
</dbReference>
<dbReference type="PROSITE" id="PS51352">
    <property type="entry name" value="THIOREDOXIN_2"/>
    <property type="match status" value="1"/>
</dbReference>
<name>PRDX1_HUMAN</name>
<gene>
    <name type="primary">PRDX1</name>
    <name type="synonym">PAGA</name>
    <name type="synonym">PAGB</name>
    <name type="synonym">TDPX2</name>
</gene>
<comment type="function">
    <text evidence="1 16">Thiol-specific peroxidase that catalyzes the reduction of hydrogen peroxide and organic hydroperoxides to water and alcohols, respectively. Plays a role in cell protection against oxidative stress by detoxifying peroxides and as sensor of hydrogen peroxide-mediated signaling events. Might participate in the signaling cascades of growth factors and tumor necrosis factor-alpha by regulating the intracellular concentrations of H(2)O(2) (PubMed:9497357). Reduces an intramolecular disulfide bond in GDPD5 that gates the ability to GDPD5 to drive postmitotic motor neuron differentiation (By similarity).</text>
</comment>
<comment type="catalytic activity">
    <reaction evidence="5 16">
        <text>a hydroperoxide + [thioredoxin]-dithiol = an alcohol + [thioredoxin]-disulfide + H2O</text>
        <dbReference type="Rhea" id="RHEA:62620"/>
        <dbReference type="Rhea" id="RHEA-COMP:10698"/>
        <dbReference type="Rhea" id="RHEA-COMP:10700"/>
        <dbReference type="ChEBI" id="CHEBI:15377"/>
        <dbReference type="ChEBI" id="CHEBI:29950"/>
        <dbReference type="ChEBI" id="CHEBI:30879"/>
        <dbReference type="ChEBI" id="CHEBI:35924"/>
        <dbReference type="ChEBI" id="CHEBI:50058"/>
        <dbReference type="EC" id="1.11.1.24"/>
    </reaction>
</comment>
<comment type="subunit">
    <text evidence="1 10 12 15">Homodimer; disulfide-linked, upon oxidation. 5 homodimers assemble to form a ring-like decamer (PubMed:18172504). Interacts with GDPD5; forms a mixed-disulfide with GDPD5 (By similarity). Interacts with SESN1 and SESN2 (PubMed:15105503). Interacts with FAM107A (PubMed:21969592).</text>
</comment>
<comment type="interaction">
    <interactant intactId="EBI-353193">
        <id>Q06830</id>
    </interactant>
    <interactant intactId="EBI-608057">
        <id>P10275</id>
        <label>AR</label>
    </interactant>
    <organismsDiffer>false</organismsDiffer>
    <experiments>3</experiments>
</comment>
<comment type="interaction">
    <interactant intactId="EBI-353193">
        <id>Q06830</id>
    </interactant>
    <interactant intactId="EBI-21529239">
        <id>Q86TI2-2</id>
        <label>DPP9</label>
    </interactant>
    <organismsDiffer>false</organismsDiffer>
    <experiments>3</experiments>
</comment>
<comment type="interaction">
    <interactant intactId="EBI-353193">
        <id>Q06830</id>
    </interactant>
    <interactant intactId="EBI-6447163">
        <id>Q8N7X4</id>
        <label>MAGEB6</label>
    </interactant>
    <organismsDiffer>false</organismsDiffer>
    <experiments>3</experiments>
</comment>
<comment type="interaction">
    <interactant intactId="EBI-353193">
        <id>Q06830</id>
    </interactant>
    <interactant intactId="EBI-2211957">
        <id>Q13162</id>
        <label>PRDX4</label>
    </interactant>
    <organismsDiffer>false</organismsDiffer>
    <experiments>2</experiments>
</comment>
<comment type="interaction">
    <interactant intactId="EBI-353193">
        <id>Q06830</id>
    </interactant>
    <interactant intactId="EBI-977302">
        <id>P04156</id>
        <label>PRNP</label>
    </interactant>
    <organismsDiffer>false</organismsDiffer>
    <experiments>4</experiments>
</comment>
<comment type="interaction">
    <interactant intactId="EBI-353193">
        <id>Q06830</id>
    </interactant>
    <interactant intactId="EBI-696162">
        <id>P60484</id>
        <label>PTEN</label>
    </interactant>
    <organismsDiffer>false</organismsDiffer>
    <experiments>7</experiments>
</comment>
<comment type="interaction">
    <interactant intactId="EBI-353193">
        <id>Q06830</id>
    </interactant>
    <interactant intactId="EBI-15678820">
        <id>Q9BYN0</id>
        <label>SRXN1</label>
    </interactant>
    <organismsDiffer>false</organismsDiffer>
    <experiments>3</experiments>
</comment>
<comment type="interaction">
    <interactant intactId="EBI-353193">
        <id>Q06830</id>
    </interactant>
    <interactant intactId="EBI-367376">
        <id>Q13043</id>
        <label>STK4</label>
    </interactant>
    <organismsDiffer>false</organismsDiffer>
    <experiments>11</experiments>
</comment>
<comment type="interaction">
    <interactant intactId="EBI-353193">
        <id>Q06830</id>
    </interactant>
    <interactant intactId="EBI-710997">
        <id>P54274</id>
        <label>TERF1</label>
    </interactant>
    <organismsDiffer>false</organismsDiffer>
    <experiments>2</experiments>
</comment>
<comment type="interaction">
    <interactant intactId="EBI-353193">
        <id>Q06830</id>
    </interactant>
    <interactant intactId="EBI-1783169">
        <id>P13693</id>
        <label>TPT1</label>
    </interactant>
    <organismsDiffer>false</organismsDiffer>
    <experiments>4</experiments>
</comment>
<comment type="subcellular location">
    <subcellularLocation>
        <location evidence="11 16">Cytoplasm</location>
    </subcellularLocation>
    <subcellularLocation>
        <location evidence="11">Melanosome</location>
    </subcellularLocation>
    <text>Identified by mass spectrometry in melanosome fractions from stage I to stage IV.</text>
</comment>
<comment type="induction">
    <text>Constitutively expressed in most human cells; is induced to higher levels upon serum stimulation in untransformed and transformed cells.</text>
</comment>
<comment type="PTM">
    <text evidence="5">Phosphorylated on Thr-90 during the M-phase, which leads to a more than 80% decrease in enzymatic activity.</text>
</comment>
<comment type="PTM">
    <text evidence="13">Acetylation increases reducing activity and resistance to superoxidation (PubMed:18606987). Deacetylated by HDAC6 which decreases reducing activity (PubMed:18606987).</text>
</comment>
<comment type="PTM">
    <text evidence="6 7 8 9 12 14">The enzyme can be inactivated by further oxidation of the cysteine sulfenic acid (C(P)-SOH) to sulphinic acid (C(P)-SO2H) instead of its condensation to a disulfide bond. It can be reactivated by forming a transient disulfide bond with sulfiredoxin SRXN1, which reduces the cysteine sulfinic acid in an ATP- and Mg-dependent manner.</text>
</comment>
<comment type="miscellaneous">
    <text evidence="22">The active site is a conserved redox-active cysteine residue, the peroxidatic cysteine (C(P)), which makes the nucleophilic attack on the peroxide substrate. The peroxide oxidizes the C(P)-SH to cysteine sulfenic acid (C(P)-SOH), which then reacts with another cysteine residue, the resolving cysteine (C(R)), to form a disulfide bridge. The disulfide is subsequently reduced by an appropriate electron donor to complete the catalytic cycle. In this typical 2-Cys peroxiredoxin, C(R) is provided by the other dimeric subunit to form an intersubunit disulfide. The disulfide is subsequently reduced by thioredoxin.</text>
</comment>
<comment type="similarity">
    <text evidence="19">Belongs to the peroxiredoxin family. AhpC/Prx1 subfamily.</text>
</comment>
<comment type="online information" name="Atlas of Genetics and Cytogenetics in Oncology and Haematology">
    <link uri="https://atlasgeneticsoncology.org/gene/266/PAG"/>
</comment>
<protein>
    <recommendedName>
        <fullName>Peroxiredoxin-1</fullName>
        <ecNumber evidence="5 16">1.11.1.24</ecNumber>
    </recommendedName>
    <alternativeName>
        <fullName>Natural killer cell-enhancing factor A</fullName>
        <shortName>NKEF-A</shortName>
    </alternativeName>
    <alternativeName>
        <fullName>Proliferation-associated gene protein</fullName>
        <shortName>PAG</shortName>
    </alternativeName>
    <alternativeName>
        <fullName>Thioredoxin peroxidase 2</fullName>
    </alternativeName>
    <alternativeName>
        <fullName>Thioredoxin-dependent peroxide reductase 2</fullName>
    </alternativeName>
    <alternativeName>
        <fullName evidence="19">Thioredoxin-dependent peroxiredoxin 1</fullName>
    </alternativeName>
</protein>
<organism>
    <name type="scientific">Homo sapiens</name>
    <name type="common">Human</name>
    <dbReference type="NCBI Taxonomy" id="9606"/>
    <lineage>
        <taxon>Eukaryota</taxon>
        <taxon>Metazoa</taxon>
        <taxon>Chordata</taxon>
        <taxon>Craniata</taxon>
        <taxon>Vertebrata</taxon>
        <taxon>Euteleostomi</taxon>
        <taxon>Mammalia</taxon>
        <taxon>Eutheria</taxon>
        <taxon>Euarchontoglires</taxon>
        <taxon>Primates</taxon>
        <taxon>Haplorrhini</taxon>
        <taxon>Catarrhini</taxon>
        <taxon>Hominidae</taxon>
        <taxon>Homo</taxon>
    </lineage>
</organism>
<evidence type="ECO:0000250" key="1">
    <source>
        <dbReference type="UniProtKB" id="P0CB50"/>
    </source>
</evidence>
<evidence type="ECO:0000250" key="2">
    <source>
        <dbReference type="UniProtKB" id="P35700"/>
    </source>
</evidence>
<evidence type="ECO:0000255" key="3">
    <source>
        <dbReference type="PROSITE-ProRule" id="PRU00691"/>
    </source>
</evidence>
<evidence type="ECO:0000256" key="4">
    <source>
        <dbReference type="SAM" id="MobiDB-lite"/>
    </source>
</evidence>
<evidence type="ECO:0000269" key="5">
    <source>
    </source>
</evidence>
<evidence type="ECO:0000269" key="6">
    <source>
    </source>
</evidence>
<evidence type="ECO:0000269" key="7">
    <source>
    </source>
</evidence>
<evidence type="ECO:0000269" key="8">
    <source>
    </source>
</evidence>
<evidence type="ECO:0000269" key="9">
    <source>
    </source>
</evidence>
<evidence type="ECO:0000269" key="10">
    <source>
    </source>
</evidence>
<evidence type="ECO:0000269" key="11">
    <source>
    </source>
</evidence>
<evidence type="ECO:0000269" key="12">
    <source>
    </source>
</evidence>
<evidence type="ECO:0000269" key="13">
    <source>
    </source>
</evidence>
<evidence type="ECO:0000269" key="14">
    <source>
    </source>
</evidence>
<evidence type="ECO:0000269" key="15">
    <source>
    </source>
</evidence>
<evidence type="ECO:0000269" key="16">
    <source>
    </source>
</evidence>
<evidence type="ECO:0000269" key="17">
    <source ref="32"/>
</evidence>
<evidence type="ECO:0000269" key="18">
    <source ref="5"/>
</evidence>
<evidence type="ECO:0000305" key="19"/>
<evidence type="ECO:0000305" key="20">
    <source>
    </source>
</evidence>
<evidence type="ECO:0000305" key="21">
    <source>
    </source>
</evidence>
<evidence type="ECO:0000305" key="22">
    <source ref="32"/>
</evidence>
<evidence type="ECO:0007744" key="23">
    <source>
        <dbReference type="PDB" id="4XCS"/>
    </source>
</evidence>
<evidence type="ECO:0007744" key="24">
    <source>
    </source>
</evidence>
<evidence type="ECO:0007744" key="25">
    <source>
    </source>
</evidence>
<evidence type="ECO:0007744" key="26">
    <source>
    </source>
</evidence>
<evidence type="ECO:0007744" key="27">
    <source>
    </source>
</evidence>
<evidence type="ECO:0007744" key="28">
    <source>
    </source>
</evidence>
<evidence type="ECO:0007744" key="29">
    <source>
    </source>
</evidence>
<evidence type="ECO:0007829" key="30">
    <source>
        <dbReference type="PDB" id="2RII"/>
    </source>
</evidence>
<evidence type="ECO:0007829" key="31">
    <source>
        <dbReference type="PDB" id="3HY2"/>
    </source>
</evidence>
<evidence type="ECO:0007829" key="32">
    <source>
        <dbReference type="PDB" id="4XCS"/>
    </source>
</evidence>
<evidence type="ECO:0007829" key="33">
    <source>
        <dbReference type="PDB" id="7WET"/>
    </source>
</evidence>